<reference key="1">
    <citation type="submission" date="2005-09" db="EMBL/GenBank/DDBJ databases">
        <title>The entire coding region of the canine lysosomal beta-galactosidase (GLB1) gene.</title>
        <authorList>
            <person name="Kreutzer R."/>
            <person name="Mueller G."/>
            <person name="Leeb T."/>
            <person name="Moritz A."/>
            <person name="Baumgaertner W."/>
        </authorList>
    </citation>
    <scope>NUCLEOTIDE SEQUENCE [MRNA]</scope>
    <source>
        <tissue>Skin</tissue>
    </source>
</reference>
<reference key="2">
    <citation type="submission" date="1998-03" db="EMBL/GenBank/DDBJ databases">
        <title>A partial sequence of canine lysosomal beta-galactosidase (GLB1).</title>
        <authorList>
            <person name="Smith B.F."/>
            <person name="Georgeson M."/>
            <person name="Baker H.J."/>
        </authorList>
    </citation>
    <scope>NUCLEOTIDE SEQUENCE [MRNA] OF 7-668</scope>
    <source>
        <strain>Beagle</strain>
        <tissue>Brain</tissue>
    </source>
</reference>
<reference key="3">
    <citation type="journal article" date="1996" name="Am. J. Med. Genet.">
        <title>Comparison of the canine and human acid beta-galactosidase gene.</title>
        <authorList>
            <person name="Ahern-Rindell A.J."/>
            <person name="Kretz K.A."/>
            <person name="O'Brien J.S."/>
        </authorList>
    </citation>
    <scope>NUCLEOTIDE SEQUENCE [MRNA] OF 27-668</scope>
    <scope>CATALYTIC ACTIVITY</scope>
    <scope>FUNCTION</scope>
    <source>
        <tissue>Kidney</tissue>
        <tissue>Muscle</tissue>
        <tissue>Pancreas</tissue>
        <tissue>Testis</tissue>
    </source>
</reference>
<proteinExistence type="evidence at protein level"/>
<keyword id="KW-1015">Disulfide bond</keyword>
<keyword id="KW-0325">Glycoprotein</keyword>
<keyword id="KW-0326">Glycosidase</keyword>
<keyword id="KW-0378">Hydrolase</keyword>
<keyword id="KW-0458">Lysosome</keyword>
<keyword id="KW-1185">Reference proteome</keyword>
<keyword id="KW-0732">Signal</keyword>
<accession>Q9TRY9</accession>
<accession>O62800</accession>
<accession>Q3HTI1</accession>
<comment type="function">
    <text evidence="6">Cleaves beta-linked terminal galactosyl residues from gangliosides, glycoproteins, and glycosaminoglycans.</text>
</comment>
<comment type="catalytic activity">
    <reaction evidence="4">
        <text>Hydrolysis of terminal non-reducing beta-D-galactose residues in beta-D-galactosides.</text>
        <dbReference type="EC" id="3.2.1.23"/>
    </reaction>
</comment>
<comment type="subunit">
    <text evidence="2">Homodimer. May form higher multimers.</text>
</comment>
<comment type="subcellular location">
    <subcellularLocation>
        <location evidence="2">Lysosome</location>
    </subcellularLocation>
</comment>
<comment type="similarity">
    <text evidence="5">Belongs to the glycosyl hydrolase 35 family.</text>
</comment>
<gene>
    <name type="primary">GLB1</name>
</gene>
<dbReference type="EC" id="3.2.1.23" evidence="4"/>
<dbReference type="EMBL" id="DQ196436">
    <property type="protein sequence ID" value="ABA43388.1"/>
    <property type="molecule type" value="mRNA"/>
</dbReference>
<dbReference type="EMBL" id="AF056084">
    <property type="protein sequence ID" value="AAC12775.1"/>
    <property type="molecule type" value="mRNA"/>
</dbReference>
<dbReference type="RefSeq" id="NP_001032730.1">
    <property type="nucleotide sequence ID" value="NM_001037641.1"/>
</dbReference>
<dbReference type="SMR" id="Q9TRY9"/>
<dbReference type="FunCoup" id="Q9TRY9">
    <property type="interactions" value="192"/>
</dbReference>
<dbReference type="STRING" id="9615.ENSCAFP00000054350"/>
<dbReference type="CAZy" id="GH35">
    <property type="family name" value="Glycoside Hydrolase Family 35"/>
</dbReference>
<dbReference type="GlyCosmos" id="Q9TRY9">
    <property type="glycosylation" value="5 sites, No reported glycans"/>
</dbReference>
<dbReference type="PaxDb" id="9612-ENSCAFP00000006929"/>
<dbReference type="Ensembl" id="ENSCAFT00000007487.6">
    <property type="protein sequence ID" value="ENSCAFP00000006929.5"/>
    <property type="gene ID" value="ENSCAFG00000004652.6"/>
</dbReference>
<dbReference type="Ensembl" id="ENSCAFT00030048317.1">
    <property type="protein sequence ID" value="ENSCAFP00030042278.1"/>
    <property type="gene ID" value="ENSCAFG00030026124.1"/>
</dbReference>
<dbReference type="Ensembl" id="ENSCAFT00040020956.1">
    <property type="protein sequence ID" value="ENSCAFP00040018195.1"/>
    <property type="gene ID" value="ENSCAFG00040011223.1"/>
</dbReference>
<dbReference type="Ensembl" id="ENSCAFT00845041332.1">
    <property type="protein sequence ID" value="ENSCAFP00845032404.1"/>
    <property type="gene ID" value="ENSCAFG00845023378.1"/>
</dbReference>
<dbReference type="GeneID" id="403873"/>
<dbReference type="KEGG" id="cfa:403873"/>
<dbReference type="CTD" id="2720"/>
<dbReference type="VEuPathDB" id="HostDB:ENSCAFG00845023378"/>
<dbReference type="VGNC" id="VGNC:41249">
    <property type="gene designation" value="GLB1"/>
</dbReference>
<dbReference type="eggNOG" id="KOG0496">
    <property type="taxonomic scope" value="Eukaryota"/>
</dbReference>
<dbReference type="GeneTree" id="ENSGT00950000182942"/>
<dbReference type="InParanoid" id="Q9TRY9"/>
<dbReference type="OrthoDB" id="1657402at2759"/>
<dbReference type="Reactome" id="R-CFA-2022857">
    <property type="pathway name" value="Keratan sulfate degradation"/>
</dbReference>
<dbReference type="Reactome" id="R-CFA-2024096">
    <property type="pathway name" value="HS-GAG degradation"/>
</dbReference>
<dbReference type="Reactome" id="R-CFA-4085001">
    <property type="pathway name" value="Sialic acid metabolism"/>
</dbReference>
<dbReference type="Reactome" id="R-CFA-6798695">
    <property type="pathway name" value="Neutrophil degranulation"/>
</dbReference>
<dbReference type="Reactome" id="R-CFA-9840310">
    <property type="pathway name" value="Glycosphingolipid catabolism"/>
</dbReference>
<dbReference type="Proteomes" id="UP000002254">
    <property type="component" value="Chromosome 23"/>
</dbReference>
<dbReference type="Proteomes" id="UP000694429">
    <property type="component" value="Chromosome 23"/>
</dbReference>
<dbReference type="Proteomes" id="UP000694542">
    <property type="component" value="Chromosome 23"/>
</dbReference>
<dbReference type="Proteomes" id="UP000805418">
    <property type="component" value="Chromosome 23"/>
</dbReference>
<dbReference type="GO" id="GO:0005615">
    <property type="term" value="C:extracellular space"/>
    <property type="evidence" value="ECO:0007669"/>
    <property type="project" value="Ensembl"/>
</dbReference>
<dbReference type="GO" id="GO:0005794">
    <property type="term" value="C:Golgi apparatus"/>
    <property type="evidence" value="ECO:0007669"/>
    <property type="project" value="Ensembl"/>
</dbReference>
<dbReference type="GO" id="GO:0005764">
    <property type="term" value="C:lysosome"/>
    <property type="evidence" value="ECO:0007669"/>
    <property type="project" value="UniProtKB-SubCell"/>
</dbReference>
<dbReference type="GO" id="GO:0016020">
    <property type="term" value="C:membrane"/>
    <property type="evidence" value="ECO:0007669"/>
    <property type="project" value="GOC"/>
</dbReference>
<dbReference type="GO" id="GO:0004565">
    <property type="term" value="F:beta-galactosidase activity"/>
    <property type="evidence" value="ECO:0000250"/>
    <property type="project" value="UniProtKB"/>
</dbReference>
<dbReference type="GO" id="GO:0042803">
    <property type="term" value="F:protein homodimerization activity"/>
    <property type="evidence" value="ECO:0007669"/>
    <property type="project" value="Ensembl"/>
</dbReference>
<dbReference type="GO" id="GO:0005975">
    <property type="term" value="P:carbohydrate metabolic process"/>
    <property type="evidence" value="ECO:0007669"/>
    <property type="project" value="Ensembl"/>
</dbReference>
<dbReference type="GO" id="GO:0006689">
    <property type="term" value="P:ganglioside catabolic process"/>
    <property type="evidence" value="ECO:0007669"/>
    <property type="project" value="Ensembl"/>
</dbReference>
<dbReference type="GO" id="GO:0042340">
    <property type="term" value="P:keratan sulfate proteoglycan catabolic process"/>
    <property type="evidence" value="ECO:0007669"/>
    <property type="project" value="Ensembl"/>
</dbReference>
<dbReference type="FunFam" id="2.60.120.260:FF:000115">
    <property type="entry name" value="Beta-galactosidase"/>
    <property type="match status" value="1"/>
</dbReference>
<dbReference type="FunFam" id="2.60.120.260:FF:000260">
    <property type="entry name" value="Beta-galactosidase"/>
    <property type="match status" value="1"/>
</dbReference>
<dbReference type="FunFam" id="3.20.20.80:FF:000017">
    <property type="entry name" value="Beta-galactosidase"/>
    <property type="match status" value="1"/>
</dbReference>
<dbReference type="Gene3D" id="2.60.120.260">
    <property type="entry name" value="Galactose-binding domain-like"/>
    <property type="match status" value="2"/>
</dbReference>
<dbReference type="Gene3D" id="3.20.20.80">
    <property type="entry name" value="Glycosidases"/>
    <property type="match status" value="1"/>
</dbReference>
<dbReference type="InterPro" id="IPR026283">
    <property type="entry name" value="B-gal_1-like"/>
</dbReference>
<dbReference type="InterPro" id="IPR048912">
    <property type="entry name" value="BetaGal1-like_ABD1"/>
</dbReference>
<dbReference type="InterPro" id="IPR048913">
    <property type="entry name" value="BetaGal_gal-bd"/>
</dbReference>
<dbReference type="InterPro" id="IPR008979">
    <property type="entry name" value="Galactose-bd-like_sf"/>
</dbReference>
<dbReference type="InterPro" id="IPR031330">
    <property type="entry name" value="Gly_Hdrlase_35_cat"/>
</dbReference>
<dbReference type="InterPro" id="IPR019801">
    <property type="entry name" value="Glyco_hydro_35_CS"/>
</dbReference>
<dbReference type="InterPro" id="IPR001944">
    <property type="entry name" value="Glycoside_Hdrlase_35"/>
</dbReference>
<dbReference type="InterPro" id="IPR017853">
    <property type="entry name" value="Glycoside_hydrolase_SF"/>
</dbReference>
<dbReference type="PANTHER" id="PTHR23421">
    <property type="entry name" value="BETA-GALACTOSIDASE RELATED"/>
    <property type="match status" value="1"/>
</dbReference>
<dbReference type="Pfam" id="PF21317">
    <property type="entry name" value="BetaGal_ABD_1"/>
    <property type="match status" value="1"/>
</dbReference>
<dbReference type="Pfam" id="PF21467">
    <property type="entry name" value="BetaGal_gal-bd"/>
    <property type="match status" value="1"/>
</dbReference>
<dbReference type="Pfam" id="PF01301">
    <property type="entry name" value="Glyco_hydro_35"/>
    <property type="match status" value="1"/>
</dbReference>
<dbReference type="PIRSF" id="PIRSF006336">
    <property type="entry name" value="B-gal"/>
    <property type="match status" value="1"/>
</dbReference>
<dbReference type="PRINTS" id="PR00742">
    <property type="entry name" value="GLHYDRLASE35"/>
</dbReference>
<dbReference type="SUPFAM" id="SSF51445">
    <property type="entry name" value="(Trans)glycosidases"/>
    <property type="match status" value="1"/>
</dbReference>
<dbReference type="SUPFAM" id="SSF49785">
    <property type="entry name" value="Galactose-binding domain-like"/>
    <property type="match status" value="1"/>
</dbReference>
<dbReference type="PROSITE" id="PS01182">
    <property type="entry name" value="GLYCOSYL_HYDROL_F35"/>
    <property type="match status" value="1"/>
</dbReference>
<evidence type="ECO:0000250" key="1"/>
<evidence type="ECO:0000250" key="2">
    <source>
        <dbReference type="UniProtKB" id="P16278"/>
    </source>
</evidence>
<evidence type="ECO:0000255" key="3"/>
<evidence type="ECO:0000269" key="4">
    <source>
    </source>
</evidence>
<evidence type="ECO:0000305" key="5"/>
<evidence type="ECO:0000305" key="6">
    <source>
    </source>
</evidence>
<protein>
    <recommendedName>
        <fullName>Beta-galactosidase</fullName>
        <ecNumber evidence="4">3.2.1.23</ecNumber>
    </recommendedName>
    <alternativeName>
        <fullName>Acid beta-galactosidase</fullName>
        <shortName>Lactase</shortName>
    </alternativeName>
</protein>
<sequence>MARPAAVRVLWALLLPLLLGSARGLRNASQRTFTIDYSHNRFLKDGQPFRYISGSIHYSRVPRFYWKDRLLKMKMAGLNAIQTYVPWNFHEPQPGQYQFSGEQDVEYFIKLAHELGLLVILRPGPYICAEWDMGGLPAWLLLKESIILRSSDPDYLAAVDKWLGVLLPKMKPLLYQNGGPIITMQVENEYGSYFTCDYDYLRFLQKLFHHHLGNDVLLFTTDGANEKFLQCGALQGLYATVDFGPGANITAAFQIQRKSEPKGPLVNSEFYTGWLDHWGQPHSTVRTEVVASSLHDILAHGANVNLYMFIGGTNFAYWNGANMPYQAQPTSYDYDAPLSEAGDLTEKYFALREVIRKFEKVPEGFIPPSTPKFAYGKVALKKLKTVEEALNVLCPPGPINSLYPLTFIQVKQYFGFVMYRTTLPQDCSDPTPLSSPLSGVHDRAYVSVDGVPQGVMERSNVITLNITGKAGATLDLLVENMGRVNYGRYINDFKGLISNLTLGSSILTNWMIFPLNTEDAVRSHLGGWHGPNNGRHDKTFAHRSSNYTLPAFYMGNFSIPSGIPDLPQDTFIQFPGWTKGQVWINGFNLGRYWPARGPQMTLFVPRHILVTSTPNTIMVLELEHAPCGDSGPEVCTVEFVDRPVIGAPPTPGHPPPDLSHRDLRLDYV</sequence>
<name>BGAL_CANLF</name>
<organism>
    <name type="scientific">Canis lupus familiaris</name>
    <name type="common">Dog</name>
    <name type="synonym">Canis familiaris</name>
    <dbReference type="NCBI Taxonomy" id="9615"/>
    <lineage>
        <taxon>Eukaryota</taxon>
        <taxon>Metazoa</taxon>
        <taxon>Chordata</taxon>
        <taxon>Craniata</taxon>
        <taxon>Vertebrata</taxon>
        <taxon>Euteleostomi</taxon>
        <taxon>Mammalia</taxon>
        <taxon>Eutheria</taxon>
        <taxon>Laurasiatheria</taxon>
        <taxon>Carnivora</taxon>
        <taxon>Caniformia</taxon>
        <taxon>Canidae</taxon>
        <taxon>Canis</taxon>
    </lineage>
</organism>
<feature type="signal peptide" evidence="3">
    <location>
        <begin position="1"/>
        <end position="24"/>
    </location>
</feature>
<feature type="propeptide" id="PRO_0000012181" evidence="1">
    <location>
        <begin position="25"/>
        <end position="29"/>
    </location>
</feature>
<feature type="chain" id="PRO_0000012182" description="Beta-galactosidase">
    <location>
        <begin position="30"/>
        <end position="668"/>
    </location>
</feature>
<feature type="active site" description="Proton donor" evidence="2">
    <location>
        <position position="189"/>
    </location>
</feature>
<feature type="active site" description="Nucleophile" evidence="2">
    <location>
        <position position="269"/>
    </location>
</feature>
<feature type="binding site" evidence="2">
    <location>
        <position position="84"/>
    </location>
    <ligand>
        <name>substrate</name>
    </ligand>
</feature>
<feature type="binding site" evidence="2">
    <location>
        <position position="130"/>
    </location>
    <ligand>
        <name>substrate</name>
    </ligand>
</feature>
<feature type="binding site" evidence="2">
    <location>
        <position position="188"/>
    </location>
    <ligand>
        <name>substrate</name>
    </ligand>
</feature>
<feature type="binding site" evidence="2">
    <location>
        <position position="334"/>
    </location>
    <ligand>
        <name>substrate</name>
    </ligand>
</feature>
<feature type="glycosylation site" description="N-linked (GlcNAc...) asparagine" evidence="3">
    <location>
        <position position="248"/>
    </location>
</feature>
<feature type="glycosylation site" description="N-linked (GlcNAc...) asparagine" evidence="3">
    <location>
        <position position="465"/>
    </location>
</feature>
<feature type="glycosylation site" description="N-linked (GlcNAc...) asparagine" evidence="3">
    <location>
        <position position="499"/>
    </location>
</feature>
<feature type="glycosylation site" description="N-linked (GlcNAc...) asparagine" evidence="3">
    <location>
        <position position="546"/>
    </location>
</feature>
<feature type="glycosylation site" description="N-linked (GlcNAc...) asparagine" evidence="3">
    <location>
        <position position="556"/>
    </location>
</feature>
<feature type="disulfide bond" evidence="2">
    <location>
        <begin position="196"/>
        <end position="231"/>
    </location>
</feature>
<feature type="disulfide bond" evidence="2">
    <location>
        <begin position="627"/>
        <end position="635"/>
    </location>
</feature>
<feature type="sequence variant">
    <original>Q</original>
    <variation>P</variation>
    <location>
        <position position="280"/>
    </location>
</feature>
<feature type="sequence variant">
    <original>D</original>
    <variation>V</variation>
    <location>
        <position position="442"/>
    </location>
</feature>
<feature type="sequence variant">
    <original>A</original>
    <variation>V</variation>
    <location>
        <position position="444"/>
    </location>
</feature>
<feature type="sequence conflict" description="In Ref. 3." evidence="5" ref="3">
    <original>R</original>
    <variation>H</variation>
    <location>
        <position position="60"/>
    </location>
</feature>
<feature type="sequence conflict" description="In Ref. 3." evidence="5" ref="3">
    <original>K</original>
    <variation>L</variation>
    <location>
        <position position="227"/>
    </location>
</feature>
<feature type="sequence conflict" description="In Ref. 3." evidence="5" ref="3">
    <original>G</original>
    <variation>A</variation>
    <location>
        <position position="342"/>
    </location>
</feature>